<keyword id="KW-0158">Chromosome</keyword>
<keyword id="KW-0217">Developmental protein</keyword>
<keyword id="KW-0221">Differentiation</keyword>
<keyword id="KW-0226">DNA condensation</keyword>
<keyword id="KW-0238">DNA-binding</keyword>
<keyword id="KW-0544">Nucleosome core</keyword>
<keyword id="KW-0539">Nucleus</keyword>
<keyword id="KW-0744">Spermatogenesis</keyword>
<proteinExistence type="evidence at transcript level"/>
<comment type="function">
    <text>Protamines substitute for histones in the chromatin of sperm during the haploid phase of spermatogenesis. They compact sperm DNA into a highly condensed, stable and inactive complex.</text>
</comment>
<comment type="subcellular location">
    <subcellularLocation>
        <location>Nucleus</location>
    </subcellularLocation>
    <subcellularLocation>
        <location>Chromosome</location>
    </subcellularLocation>
</comment>
<comment type="tissue specificity">
    <text>Testis.</text>
</comment>
<comment type="similarity">
    <text evidence="2">Belongs to the protamine P1 family.</text>
</comment>
<organism>
    <name type="scientific">Dendrolagus dorianus</name>
    <name type="common">Doria's tree-kangaroo</name>
    <name type="synonym">Unicolored tree-kangaroo</name>
    <dbReference type="NCBI Taxonomy" id="65608"/>
    <lineage>
        <taxon>Eukaryota</taxon>
        <taxon>Metazoa</taxon>
        <taxon>Chordata</taxon>
        <taxon>Craniata</taxon>
        <taxon>Vertebrata</taxon>
        <taxon>Euteleostomi</taxon>
        <taxon>Mammalia</taxon>
        <taxon>Metatheria</taxon>
        <taxon>Diprotodontia</taxon>
        <taxon>Macropodidae</taxon>
        <taxon>Dendrolagus</taxon>
    </lineage>
</organism>
<protein>
    <recommendedName>
        <fullName>Sperm protamine P1</fullName>
    </recommendedName>
</protein>
<evidence type="ECO:0000256" key="1">
    <source>
        <dbReference type="SAM" id="MobiDB-lite"/>
    </source>
</evidence>
<evidence type="ECO:0000305" key="2"/>
<dbReference type="EMBL" id="AF187536">
    <property type="protein sequence ID" value="AAG27953.1"/>
    <property type="molecule type" value="Genomic_DNA"/>
</dbReference>
<dbReference type="GO" id="GO:0000786">
    <property type="term" value="C:nucleosome"/>
    <property type="evidence" value="ECO:0007669"/>
    <property type="project" value="UniProtKB-KW"/>
</dbReference>
<dbReference type="GO" id="GO:0005634">
    <property type="term" value="C:nucleus"/>
    <property type="evidence" value="ECO:0007669"/>
    <property type="project" value="UniProtKB-SubCell"/>
</dbReference>
<dbReference type="GO" id="GO:0003677">
    <property type="term" value="F:DNA binding"/>
    <property type="evidence" value="ECO:0007669"/>
    <property type="project" value="UniProtKB-KW"/>
</dbReference>
<dbReference type="GO" id="GO:0030154">
    <property type="term" value="P:cell differentiation"/>
    <property type="evidence" value="ECO:0007669"/>
    <property type="project" value="UniProtKB-KW"/>
</dbReference>
<dbReference type="GO" id="GO:0030261">
    <property type="term" value="P:chromosome condensation"/>
    <property type="evidence" value="ECO:0007669"/>
    <property type="project" value="UniProtKB-KW"/>
</dbReference>
<dbReference type="GO" id="GO:0007283">
    <property type="term" value="P:spermatogenesis"/>
    <property type="evidence" value="ECO:0007669"/>
    <property type="project" value="UniProtKB-KW"/>
</dbReference>
<dbReference type="PROSITE" id="PS00048">
    <property type="entry name" value="PROTAMINE_P1"/>
    <property type="match status" value="1"/>
</dbReference>
<feature type="chain" id="PRO_0000191468" description="Sperm protamine P1">
    <location>
        <begin position="1"/>
        <end position="62"/>
    </location>
</feature>
<feature type="region of interest" description="Disordered" evidence="1">
    <location>
        <begin position="1"/>
        <end position="62"/>
    </location>
</feature>
<name>HSP1_DENDO</name>
<reference key="1">
    <citation type="journal article" date="2000" name="J. Mammal. Evol.">
        <title>Intergeneric relationships among Macropodoidea (Metatheria: Diprotodontia) and the chronicle of kangaroo evolution.</title>
        <authorList>
            <person name="Burk A."/>
            <person name="Springer M.S."/>
        </authorList>
    </citation>
    <scope>NUCLEOTIDE SEQUENCE [GENOMIC DNA]</scope>
</reference>
<accession>Q9GLQ6</accession>
<gene>
    <name type="primary">PRM1</name>
</gene>
<sequence length="62" mass="8592">MARYRHSRSRXRSRYRRRRRXRSRYRSXRRRYRGRRRRRSRRGRRRRGYSRXRYSRRRRRRY</sequence>